<dbReference type="EC" id="3.4.11.18" evidence="1"/>
<dbReference type="EMBL" id="DS547091">
    <property type="protein sequence ID" value="EDR15225.1"/>
    <property type="molecule type" value="Genomic_DNA"/>
</dbReference>
<dbReference type="RefSeq" id="XP_001873433.1">
    <property type="nucleotide sequence ID" value="XM_001873398.1"/>
</dbReference>
<dbReference type="SMR" id="B0CRL4"/>
<dbReference type="FunCoup" id="B0CRL4">
    <property type="interactions" value="709"/>
</dbReference>
<dbReference type="STRING" id="486041.B0CRL4"/>
<dbReference type="GeneID" id="6069222"/>
<dbReference type="KEGG" id="lbc:LACBIDRAFT_242662"/>
<dbReference type="HOGENOM" id="CLU_015857_7_1_1"/>
<dbReference type="InParanoid" id="B0CRL4"/>
<dbReference type="OrthoDB" id="7848262at2759"/>
<dbReference type="Proteomes" id="UP000001194">
    <property type="component" value="Unassembled WGS sequence"/>
</dbReference>
<dbReference type="GO" id="GO:0005737">
    <property type="term" value="C:cytoplasm"/>
    <property type="evidence" value="ECO:0007669"/>
    <property type="project" value="UniProtKB-SubCell"/>
</dbReference>
<dbReference type="GO" id="GO:0004239">
    <property type="term" value="F:initiator methionyl aminopeptidase activity"/>
    <property type="evidence" value="ECO:0007669"/>
    <property type="project" value="UniProtKB-UniRule"/>
</dbReference>
<dbReference type="GO" id="GO:0046872">
    <property type="term" value="F:metal ion binding"/>
    <property type="evidence" value="ECO:0007669"/>
    <property type="project" value="UniProtKB-UniRule"/>
</dbReference>
<dbReference type="GO" id="GO:0070006">
    <property type="term" value="F:metalloaminopeptidase activity"/>
    <property type="evidence" value="ECO:0007669"/>
    <property type="project" value="UniProtKB-UniRule"/>
</dbReference>
<dbReference type="GO" id="GO:0006508">
    <property type="term" value="P:proteolysis"/>
    <property type="evidence" value="ECO:0007669"/>
    <property type="project" value="UniProtKB-KW"/>
</dbReference>
<dbReference type="CDD" id="cd01088">
    <property type="entry name" value="MetAP2"/>
    <property type="match status" value="1"/>
</dbReference>
<dbReference type="Gene3D" id="3.90.230.10">
    <property type="entry name" value="Creatinase/methionine aminopeptidase superfamily"/>
    <property type="match status" value="1"/>
</dbReference>
<dbReference type="Gene3D" id="1.10.10.10">
    <property type="entry name" value="Winged helix-like DNA-binding domain superfamily/Winged helix DNA-binding domain"/>
    <property type="match status" value="1"/>
</dbReference>
<dbReference type="HAMAP" id="MF_03175">
    <property type="entry name" value="MetAP_2_euk"/>
    <property type="match status" value="1"/>
</dbReference>
<dbReference type="InterPro" id="IPR036005">
    <property type="entry name" value="Creatinase/aminopeptidase-like"/>
</dbReference>
<dbReference type="InterPro" id="IPR050247">
    <property type="entry name" value="Met_Aminopeptidase_Type2"/>
</dbReference>
<dbReference type="InterPro" id="IPR000994">
    <property type="entry name" value="Pept_M24"/>
</dbReference>
<dbReference type="InterPro" id="IPR001714">
    <property type="entry name" value="Pept_M24_MAP"/>
</dbReference>
<dbReference type="InterPro" id="IPR002468">
    <property type="entry name" value="Pept_M24A_MAP2"/>
</dbReference>
<dbReference type="InterPro" id="IPR036388">
    <property type="entry name" value="WH-like_DNA-bd_sf"/>
</dbReference>
<dbReference type="InterPro" id="IPR036390">
    <property type="entry name" value="WH_DNA-bd_sf"/>
</dbReference>
<dbReference type="NCBIfam" id="TIGR00501">
    <property type="entry name" value="met_pdase_II"/>
    <property type="match status" value="1"/>
</dbReference>
<dbReference type="PANTHER" id="PTHR45777">
    <property type="entry name" value="METHIONINE AMINOPEPTIDASE 2"/>
    <property type="match status" value="1"/>
</dbReference>
<dbReference type="PANTHER" id="PTHR45777:SF2">
    <property type="entry name" value="METHIONINE AMINOPEPTIDASE 2"/>
    <property type="match status" value="1"/>
</dbReference>
<dbReference type="Pfam" id="PF00557">
    <property type="entry name" value="Peptidase_M24"/>
    <property type="match status" value="1"/>
</dbReference>
<dbReference type="PRINTS" id="PR00599">
    <property type="entry name" value="MAPEPTIDASE"/>
</dbReference>
<dbReference type="SUPFAM" id="SSF55920">
    <property type="entry name" value="Creatinase/aminopeptidase"/>
    <property type="match status" value="1"/>
</dbReference>
<dbReference type="SUPFAM" id="SSF46785">
    <property type="entry name" value="Winged helix' DNA-binding domain"/>
    <property type="match status" value="1"/>
</dbReference>
<accession>B0CRL4</accession>
<reference key="1">
    <citation type="journal article" date="2008" name="Nature">
        <title>The genome of Laccaria bicolor provides insights into mycorrhizal symbiosis.</title>
        <authorList>
            <person name="Martin F."/>
            <person name="Aerts A."/>
            <person name="Ahren D."/>
            <person name="Brun A."/>
            <person name="Danchin E.G.J."/>
            <person name="Duchaussoy F."/>
            <person name="Gibon J."/>
            <person name="Kohler A."/>
            <person name="Lindquist E."/>
            <person name="Pereda V."/>
            <person name="Salamov A."/>
            <person name="Shapiro H.J."/>
            <person name="Wuyts J."/>
            <person name="Blaudez D."/>
            <person name="Buee M."/>
            <person name="Brokstein P."/>
            <person name="Canbaeck B."/>
            <person name="Cohen D."/>
            <person name="Courty P.E."/>
            <person name="Coutinho P.M."/>
            <person name="Delaruelle C."/>
            <person name="Detter J.C."/>
            <person name="Deveau A."/>
            <person name="DiFazio S."/>
            <person name="Duplessis S."/>
            <person name="Fraissinet-Tachet L."/>
            <person name="Lucic E."/>
            <person name="Frey-Klett P."/>
            <person name="Fourrey C."/>
            <person name="Feussner I."/>
            <person name="Gay G."/>
            <person name="Grimwood J."/>
            <person name="Hoegger P.J."/>
            <person name="Jain P."/>
            <person name="Kilaru S."/>
            <person name="Labbe J."/>
            <person name="Lin Y.C."/>
            <person name="Legue V."/>
            <person name="Le Tacon F."/>
            <person name="Marmeisse R."/>
            <person name="Melayah D."/>
            <person name="Montanini B."/>
            <person name="Muratet M."/>
            <person name="Nehls U."/>
            <person name="Niculita-Hirzel H."/>
            <person name="Oudot-Le Secq M.P."/>
            <person name="Peter M."/>
            <person name="Quesneville H."/>
            <person name="Rajashekar B."/>
            <person name="Reich M."/>
            <person name="Rouhier N."/>
            <person name="Schmutz J."/>
            <person name="Yin T."/>
            <person name="Chalot M."/>
            <person name="Henrissat B."/>
            <person name="Kuees U."/>
            <person name="Lucas S."/>
            <person name="Van de Peer Y."/>
            <person name="Podila G.K."/>
            <person name="Polle A."/>
            <person name="Pukkila P.J."/>
            <person name="Richardson P.M."/>
            <person name="Rouze P."/>
            <person name="Sanders I.R."/>
            <person name="Stajich J.E."/>
            <person name="Tunlid A."/>
            <person name="Tuskan G."/>
            <person name="Grigoriev I.V."/>
        </authorList>
    </citation>
    <scope>NUCLEOTIDE SEQUENCE [LARGE SCALE GENOMIC DNA]</scope>
    <source>
        <strain>S238N-H82 / ATCC MYA-4686</strain>
    </source>
</reference>
<feature type="chain" id="PRO_0000407653" description="Methionine aminopeptidase 2">
    <location>
        <begin position="1"/>
        <end position="358"/>
    </location>
</feature>
<feature type="binding site" evidence="1">
    <location>
        <position position="111"/>
    </location>
    <ligand>
        <name>substrate</name>
    </ligand>
</feature>
<feature type="binding site" evidence="1">
    <location>
        <position position="131"/>
    </location>
    <ligand>
        <name>a divalent metal cation</name>
        <dbReference type="ChEBI" id="CHEBI:60240"/>
        <label>1</label>
    </ligand>
</feature>
<feature type="binding site" evidence="1">
    <location>
        <position position="142"/>
    </location>
    <ligand>
        <name>a divalent metal cation</name>
        <dbReference type="ChEBI" id="CHEBI:60240"/>
        <label>1</label>
    </ligand>
</feature>
<feature type="binding site" evidence="1">
    <location>
        <position position="142"/>
    </location>
    <ligand>
        <name>a divalent metal cation</name>
        <dbReference type="ChEBI" id="CHEBI:60240"/>
        <label>2</label>
        <note>catalytic</note>
    </ligand>
</feature>
<feature type="binding site" evidence="1">
    <location>
        <position position="211"/>
    </location>
    <ligand>
        <name>a divalent metal cation</name>
        <dbReference type="ChEBI" id="CHEBI:60240"/>
        <label>2</label>
        <note>catalytic</note>
    </ligand>
</feature>
<feature type="binding site" evidence="1">
    <location>
        <position position="219"/>
    </location>
    <ligand>
        <name>substrate</name>
    </ligand>
</feature>
<feature type="binding site" evidence="1">
    <location>
        <position position="244"/>
    </location>
    <ligand>
        <name>a divalent metal cation</name>
        <dbReference type="ChEBI" id="CHEBI:60240"/>
        <label>2</label>
        <note>catalytic</note>
    </ligand>
</feature>
<feature type="binding site" evidence="1">
    <location>
        <position position="339"/>
    </location>
    <ligand>
        <name>a divalent metal cation</name>
        <dbReference type="ChEBI" id="CHEBI:60240"/>
        <label>1</label>
    </ligand>
</feature>
<feature type="binding site" evidence="1">
    <location>
        <position position="339"/>
    </location>
    <ligand>
        <name>a divalent metal cation</name>
        <dbReference type="ChEBI" id="CHEBI:60240"/>
        <label>2</label>
        <note>catalytic</note>
    </ligand>
</feature>
<gene>
    <name type="ORF">LACBIDRAFT_242662</name>
</gene>
<proteinExistence type="inferred from homology"/>
<keyword id="KW-0031">Aminopeptidase</keyword>
<keyword id="KW-0963">Cytoplasm</keyword>
<keyword id="KW-0378">Hydrolase</keyword>
<keyword id="KW-0479">Metal-binding</keyword>
<keyword id="KW-0645">Protease</keyword>
<keyword id="KW-1185">Reference proteome</keyword>
<comment type="function">
    <text evidence="1">Cotranslationally removes the N-terminal methionine from nascent proteins. The N-terminal methionine is often cleaved when the second residue in the primary sequence is small and uncharged (Met-Ala-, Cys, Gly, Pro, Ser, Thr, or Val).</text>
</comment>
<comment type="catalytic activity">
    <reaction evidence="1">
        <text>Release of N-terminal amino acids, preferentially methionine, from peptides and arylamides.</text>
        <dbReference type="EC" id="3.4.11.18"/>
    </reaction>
</comment>
<comment type="cofactor">
    <cofactor evidence="1">
        <name>Co(2+)</name>
        <dbReference type="ChEBI" id="CHEBI:48828"/>
    </cofactor>
    <cofactor evidence="1">
        <name>Zn(2+)</name>
        <dbReference type="ChEBI" id="CHEBI:29105"/>
    </cofactor>
    <cofactor evidence="1">
        <name>Mn(2+)</name>
        <dbReference type="ChEBI" id="CHEBI:29035"/>
    </cofactor>
    <cofactor evidence="1">
        <name>Fe(2+)</name>
        <dbReference type="ChEBI" id="CHEBI:29033"/>
    </cofactor>
    <text evidence="1">Binds 2 divalent metal cations per subunit. Has a high-affinity and a low affinity metal-binding site. The true nature of the physiological cofactor is under debate. The enzyme is active with cobalt, zinc, manganese or divalent iron ions. Most likely, methionine aminopeptidases function as mononuclear Fe(2+)-metalloproteases under physiological conditions, and the catalytically relevant metal-binding site has been assigned to the histidine-containing high-affinity site.</text>
</comment>
<comment type="subcellular location">
    <subcellularLocation>
        <location evidence="1">Cytoplasm</location>
    </subcellularLocation>
</comment>
<comment type="similarity">
    <text evidence="1">Belongs to the peptidase M24A family. Methionine aminopeptidase eukaryotic type 2 subfamily.</text>
</comment>
<evidence type="ECO:0000255" key="1">
    <source>
        <dbReference type="HAMAP-Rule" id="MF_03175"/>
    </source>
</evidence>
<organism>
    <name type="scientific">Laccaria bicolor (strain S238N-H82 / ATCC MYA-4686)</name>
    <name type="common">Bicoloured deceiver</name>
    <name type="synonym">Laccaria laccata var. bicolor</name>
    <dbReference type="NCBI Taxonomy" id="486041"/>
    <lineage>
        <taxon>Eukaryota</taxon>
        <taxon>Fungi</taxon>
        <taxon>Dikarya</taxon>
        <taxon>Basidiomycota</taxon>
        <taxon>Agaricomycotina</taxon>
        <taxon>Agaricomycetes</taxon>
        <taxon>Agaricomycetidae</taxon>
        <taxon>Agaricales</taxon>
        <taxon>Agaricineae</taxon>
        <taxon>Hydnangiaceae</taxon>
        <taxon>Laccaria</taxon>
    </lineage>
</organism>
<sequence>MSACTSFLRVAGDKVNLSFSSNSWRTTSEEKRYDERMANEDPEKTYQSIRRAAEVHRQVRQHARRHIRPGMTMTEIANNIEDGTRALVEEDGLLSGVGFPTGLSLNNCAAHYTPNAGDTTVLQKGDVLKVDIGVHVKGRIADSAFTLTWEPTYNKLLEAVKAATDTGIRESGIDARLGEIAGAIQETMESYEVEVNGTVYPVKPIENLSGHSINPYQIHGGKSILLVKNDDQTKMEEGEYFAIETFGSTGRGRIVESGEVSHYARRMDAPHVPLRLTSAKTLLKSINKNFGTLPFCRRYLDRAGESKYLLALNHLVGQGIVQDYPPLCDQRGSMTAQFEHTILLRPTVKEVVTRGDDY</sequence>
<name>MAP2_LACBS</name>
<protein>
    <recommendedName>
        <fullName evidence="1">Methionine aminopeptidase 2</fullName>
        <shortName evidence="1">MAP 2</shortName>
        <shortName evidence="1">MetAP 2</shortName>
        <ecNumber evidence="1">3.4.11.18</ecNumber>
    </recommendedName>
    <alternativeName>
        <fullName evidence="1">Peptidase M</fullName>
    </alternativeName>
</protein>